<accession>Q2NW20</accession>
<organism>
    <name type="scientific">Sodalis glossinidius (strain morsitans)</name>
    <dbReference type="NCBI Taxonomy" id="343509"/>
    <lineage>
        <taxon>Bacteria</taxon>
        <taxon>Pseudomonadati</taxon>
        <taxon>Pseudomonadota</taxon>
        <taxon>Gammaproteobacteria</taxon>
        <taxon>Enterobacterales</taxon>
        <taxon>Bruguierivoracaceae</taxon>
        <taxon>Sodalis</taxon>
    </lineage>
</organism>
<dbReference type="EMBL" id="AP008232">
    <property type="protein sequence ID" value="BAE73655.1"/>
    <property type="molecule type" value="Genomic_DNA"/>
</dbReference>
<dbReference type="RefSeq" id="WP_011410243.1">
    <property type="nucleotide sequence ID" value="NC_007712.1"/>
</dbReference>
<dbReference type="SMR" id="Q2NW20"/>
<dbReference type="STRING" id="343509.SG0380"/>
<dbReference type="KEGG" id="sgl:SG0380"/>
<dbReference type="eggNOG" id="COG0184">
    <property type="taxonomic scope" value="Bacteria"/>
</dbReference>
<dbReference type="HOGENOM" id="CLU_148518_0_0_6"/>
<dbReference type="OrthoDB" id="9799262at2"/>
<dbReference type="BioCyc" id="SGLO343509:SGP1_RS03565-MONOMER"/>
<dbReference type="Proteomes" id="UP000001932">
    <property type="component" value="Chromosome"/>
</dbReference>
<dbReference type="GO" id="GO:0022627">
    <property type="term" value="C:cytosolic small ribosomal subunit"/>
    <property type="evidence" value="ECO:0007669"/>
    <property type="project" value="TreeGrafter"/>
</dbReference>
<dbReference type="GO" id="GO:0019843">
    <property type="term" value="F:rRNA binding"/>
    <property type="evidence" value="ECO:0007669"/>
    <property type="project" value="UniProtKB-UniRule"/>
</dbReference>
<dbReference type="GO" id="GO:0003735">
    <property type="term" value="F:structural constituent of ribosome"/>
    <property type="evidence" value="ECO:0007669"/>
    <property type="project" value="InterPro"/>
</dbReference>
<dbReference type="GO" id="GO:0006412">
    <property type="term" value="P:translation"/>
    <property type="evidence" value="ECO:0007669"/>
    <property type="project" value="UniProtKB-UniRule"/>
</dbReference>
<dbReference type="CDD" id="cd00353">
    <property type="entry name" value="Ribosomal_S15p_S13e"/>
    <property type="match status" value="1"/>
</dbReference>
<dbReference type="FunFam" id="1.10.287.10:FF:000002">
    <property type="entry name" value="30S ribosomal protein S15"/>
    <property type="match status" value="1"/>
</dbReference>
<dbReference type="Gene3D" id="6.10.250.3130">
    <property type="match status" value="1"/>
</dbReference>
<dbReference type="Gene3D" id="1.10.287.10">
    <property type="entry name" value="S15/NS1, RNA-binding"/>
    <property type="match status" value="1"/>
</dbReference>
<dbReference type="HAMAP" id="MF_01343_B">
    <property type="entry name" value="Ribosomal_uS15_B"/>
    <property type="match status" value="1"/>
</dbReference>
<dbReference type="InterPro" id="IPR000589">
    <property type="entry name" value="Ribosomal_uS15"/>
</dbReference>
<dbReference type="InterPro" id="IPR005290">
    <property type="entry name" value="Ribosomal_uS15_bac-type"/>
</dbReference>
<dbReference type="InterPro" id="IPR009068">
    <property type="entry name" value="uS15_NS1_RNA-bd_sf"/>
</dbReference>
<dbReference type="NCBIfam" id="TIGR00952">
    <property type="entry name" value="S15_bact"/>
    <property type="match status" value="1"/>
</dbReference>
<dbReference type="PANTHER" id="PTHR23321">
    <property type="entry name" value="RIBOSOMAL PROTEIN S15, BACTERIAL AND ORGANELLAR"/>
    <property type="match status" value="1"/>
</dbReference>
<dbReference type="PANTHER" id="PTHR23321:SF26">
    <property type="entry name" value="SMALL RIBOSOMAL SUBUNIT PROTEIN US15M"/>
    <property type="match status" value="1"/>
</dbReference>
<dbReference type="Pfam" id="PF00312">
    <property type="entry name" value="Ribosomal_S15"/>
    <property type="match status" value="1"/>
</dbReference>
<dbReference type="SMART" id="SM01387">
    <property type="entry name" value="Ribosomal_S15"/>
    <property type="match status" value="1"/>
</dbReference>
<dbReference type="SUPFAM" id="SSF47060">
    <property type="entry name" value="S15/NS1 RNA-binding domain"/>
    <property type="match status" value="1"/>
</dbReference>
<dbReference type="PROSITE" id="PS00362">
    <property type="entry name" value="RIBOSOMAL_S15"/>
    <property type="match status" value="1"/>
</dbReference>
<feature type="chain" id="PRO_0000255531" description="Small ribosomal subunit protein uS15">
    <location>
        <begin position="1"/>
        <end position="89"/>
    </location>
</feature>
<comment type="function">
    <text evidence="1">One of the primary rRNA binding proteins, it binds directly to 16S rRNA where it helps nucleate assembly of the platform of the 30S subunit by binding and bridging several RNA helices of the 16S rRNA.</text>
</comment>
<comment type="function">
    <text evidence="1">Forms an intersubunit bridge (bridge B4) with the 23S rRNA of the 50S subunit in the ribosome.</text>
</comment>
<comment type="subunit">
    <text evidence="1">Part of the 30S ribosomal subunit. Forms a bridge to the 50S subunit in the 70S ribosome, contacting the 23S rRNA.</text>
</comment>
<comment type="similarity">
    <text evidence="1">Belongs to the universal ribosomal protein uS15 family.</text>
</comment>
<sequence>MSLSVEAKAKIVSDFGSDAKDSGSTEVQVALLTAQISHLQGHFAEHKKDHHSRRGLLRMVSQRRKLLDYLKGKDVARYTSLIERLGLRR</sequence>
<evidence type="ECO:0000255" key="1">
    <source>
        <dbReference type="HAMAP-Rule" id="MF_01343"/>
    </source>
</evidence>
<evidence type="ECO:0000305" key="2"/>
<reference key="1">
    <citation type="journal article" date="2006" name="Genome Res.">
        <title>Massive genome erosion and functional adaptations provide insights into the symbiotic lifestyle of Sodalis glossinidius in the tsetse host.</title>
        <authorList>
            <person name="Toh H."/>
            <person name="Weiss B.L."/>
            <person name="Perkin S.A.H."/>
            <person name="Yamashita A."/>
            <person name="Oshima K."/>
            <person name="Hattori M."/>
            <person name="Aksoy S."/>
        </authorList>
    </citation>
    <scope>NUCLEOTIDE SEQUENCE [LARGE SCALE GENOMIC DNA]</scope>
    <source>
        <strain>morsitans</strain>
    </source>
</reference>
<proteinExistence type="inferred from homology"/>
<protein>
    <recommendedName>
        <fullName evidence="1">Small ribosomal subunit protein uS15</fullName>
    </recommendedName>
    <alternativeName>
        <fullName evidence="2">30S ribosomal protein S15</fullName>
    </alternativeName>
</protein>
<keyword id="KW-0687">Ribonucleoprotein</keyword>
<keyword id="KW-0689">Ribosomal protein</keyword>
<keyword id="KW-0694">RNA-binding</keyword>
<keyword id="KW-0699">rRNA-binding</keyword>
<name>RS15_SODGM</name>
<gene>
    <name evidence="1" type="primary">rpsO</name>
    <name type="ordered locus">SG0380</name>
</gene>